<protein>
    <recommendedName>
        <fullName>Enhancer of mRNA-decapping protein 1</fullName>
    </recommendedName>
</protein>
<proteinExistence type="inferred from homology"/>
<reference key="1">
    <citation type="journal article" date="2004" name="Proc. Natl. Acad. Sci. U.S.A.">
        <title>The diploid genome sequence of Candida albicans.</title>
        <authorList>
            <person name="Jones T."/>
            <person name="Federspiel N.A."/>
            <person name="Chibana H."/>
            <person name="Dungan J."/>
            <person name="Kalman S."/>
            <person name="Magee B.B."/>
            <person name="Newport G."/>
            <person name="Thorstenson Y.R."/>
            <person name="Agabian N."/>
            <person name="Magee P.T."/>
            <person name="Davis R.W."/>
            <person name="Scherer S."/>
        </authorList>
    </citation>
    <scope>NUCLEOTIDE SEQUENCE [LARGE SCALE GENOMIC DNA]</scope>
    <source>
        <strain>SC5314 / ATCC MYA-2876</strain>
    </source>
</reference>
<reference key="2">
    <citation type="journal article" date="2007" name="Genome Biol.">
        <title>Assembly of the Candida albicans genome into sixteen supercontigs aligned on the eight chromosomes.</title>
        <authorList>
            <person name="van het Hoog M."/>
            <person name="Rast T.J."/>
            <person name="Martchenko M."/>
            <person name="Grindle S."/>
            <person name="Dignard D."/>
            <person name="Hogues H."/>
            <person name="Cuomo C."/>
            <person name="Berriman M."/>
            <person name="Scherer S."/>
            <person name="Magee B.B."/>
            <person name="Whiteway M."/>
            <person name="Chibana H."/>
            <person name="Nantel A."/>
            <person name="Magee P.T."/>
        </authorList>
    </citation>
    <scope>GENOME REANNOTATION</scope>
    <source>
        <strain>SC5314 / ATCC MYA-2876</strain>
    </source>
</reference>
<reference key="3">
    <citation type="journal article" date="2013" name="Genome Biol.">
        <title>Assembly of a phased diploid Candida albicans genome facilitates allele-specific measurements and provides a simple model for repeat and indel structure.</title>
        <authorList>
            <person name="Muzzey D."/>
            <person name="Schwartz K."/>
            <person name="Weissman J.S."/>
            <person name="Sherlock G."/>
        </authorList>
    </citation>
    <scope>NUCLEOTIDE SEQUENCE [LARGE SCALE GENOMIC DNA]</scope>
    <scope>GENOME REANNOTATION</scope>
    <source>
        <strain>SC5314 / ATCC MYA-2876</strain>
    </source>
</reference>
<evidence type="ECO:0000250" key="1"/>
<evidence type="ECO:0000256" key="2">
    <source>
        <dbReference type="SAM" id="MobiDB-lite"/>
    </source>
</evidence>
<evidence type="ECO:0000305" key="3"/>
<dbReference type="EMBL" id="CP017624">
    <property type="protein sequence ID" value="AOW27259.1"/>
    <property type="molecule type" value="Genomic_DNA"/>
</dbReference>
<dbReference type="RefSeq" id="XP_722579.2">
    <property type="nucleotide sequence ID" value="XM_717486.2"/>
</dbReference>
<dbReference type="STRING" id="237561.Q5ALP1"/>
<dbReference type="EnsemblFungi" id="C2_02190C_A-T">
    <property type="protein sequence ID" value="C2_02190C_A-T-p1"/>
    <property type="gene ID" value="C2_02190C_A"/>
</dbReference>
<dbReference type="GeneID" id="3635753"/>
<dbReference type="KEGG" id="cal:CAALFM_C202190CA"/>
<dbReference type="CGD" id="CAL0000181580">
    <property type="gene designation" value="orf19.9110"/>
</dbReference>
<dbReference type="VEuPathDB" id="FungiDB:C2_02190C_A"/>
<dbReference type="HOGENOM" id="CLU_097606_0_0_1"/>
<dbReference type="InParanoid" id="Q5ALP1"/>
<dbReference type="OrthoDB" id="4026794at2759"/>
<dbReference type="PRO" id="PR:Q5ALP1"/>
<dbReference type="Proteomes" id="UP000000559">
    <property type="component" value="Chromosome 2"/>
</dbReference>
<dbReference type="GO" id="GO:0005737">
    <property type="term" value="C:cytoplasm"/>
    <property type="evidence" value="ECO:0007669"/>
    <property type="project" value="UniProtKB-SubCell"/>
</dbReference>
<dbReference type="GO" id="GO:0003723">
    <property type="term" value="F:RNA binding"/>
    <property type="evidence" value="ECO:0007669"/>
    <property type="project" value="UniProtKB-KW"/>
</dbReference>
<dbReference type="GO" id="GO:0006397">
    <property type="term" value="P:mRNA processing"/>
    <property type="evidence" value="ECO:0007669"/>
    <property type="project" value="UniProtKB-KW"/>
</dbReference>
<dbReference type="GO" id="GO:0000184">
    <property type="term" value="P:nuclear-transcribed mRNA catabolic process, nonsense-mediated decay"/>
    <property type="evidence" value="ECO:0007669"/>
    <property type="project" value="UniProtKB-KW"/>
</dbReference>
<dbReference type="InterPro" id="IPR028322">
    <property type="entry name" value="PNRC-like_rgn"/>
</dbReference>
<dbReference type="Pfam" id="PF15365">
    <property type="entry name" value="PNRC"/>
    <property type="match status" value="1"/>
</dbReference>
<feature type="chain" id="PRO_0000285357" description="Enhancer of mRNA-decapping protein 1">
    <location>
        <begin position="1"/>
        <end position="264"/>
    </location>
</feature>
<feature type="region of interest" description="Disordered" evidence="2">
    <location>
        <begin position="1"/>
        <end position="180"/>
    </location>
</feature>
<feature type="region of interest" description="Disordered" evidence="2">
    <location>
        <begin position="193"/>
        <end position="264"/>
    </location>
</feature>
<feature type="compositionally biased region" description="Basic residues" evidence="2">
    <location>
        <begin position="63"/>
        <end position="74"/>
    </location>
</feature>
<feature type="compositionally biased region" description="Polar residues" evidence="2">
    <location>
        <begin position="83"/>
        <end position="92"/>
    </location>
</feature>
<feature type="compositionally biased region" description="Pro residues" evidence="2">
    <location>
        <begin position="108"/>
        <end position="118"/>
    </location>
</feature>
<feature type="compositionally biased region" description="Low complexity" evidence="2">
    <location>
        <begin position="119"/>
        <end position="134"/>
    </location>
</feature>
<feature type="compositionally biased region" description="Low complexity" evidence="2">
    <location>
        <begin position="161"/>
        <end position="172"/>
    </location>
</feature>
<feature type="compositionally biased region" description="Low complexity" evidence="2">
    <location>
        <begin position="208"/>
        <end position="226"/>
    </location>
</feature>
<feature type="compositionally biased region" description="Polar residues" evidence="2">
    <location>
        <begin position="248"/>
        <end position="264"/>
    </location>
</feature>
<sequence length="264" mass="28928">MLAQQQPPTPTPTPQQSQPQPQPQPQPQQMSQSRKSKSKKKQSYYDEEVRTLPSGAPVDFGHGKKSTSKPKSKSKPASSSTTNFKLTASPSLPSGAKPNFQPYKSTSPSPPPPPPPSTQPSTSTSTSPTPRTSTGNKNHHNRHQSNHSDYDNDHPQLSLPNGKKPNFFNNNNNDKKFSTIPFDSSINLIRKQYNNPNTKAIKEKKLDNNNNNNSSNNSNNSNNSNSAYYAGSSFHSSPDALNLPKPSFKSNNGSPRQSSGLRDY</sequence>
<organism>
    <name type="scientific">Candida albicans (strain SC5314 / ATCC MYA-2876)</name>
    <name type="common">Yeast</name>
    <dbReference type="NCBI Taxonomy" id="237561"/>
    <lineage>
        <taxon>Eukaryota</taxon>
        <taxon>Fungi</taxon>
        <taxon>Dikarya</taxon>
        <taxon>Ascomycota</taxon>
        <taxon>Saccharomycotina</taxon>
        <taxon>Pichiomycetes</taxon>
        <taxon>Debaryomycetaceae</taxon>
        <taxon>Candida/Lodderomyces clade</taxon>
        <taxon>Candida</taxon>
    </lineage>
</organism>
<keyword id="KW-0963">Cytoplasm</keyword>
<keyword id="KW-0507">mRNA processing</keyword>
<keyword id="KW-0866">Nonsense-mediated mRNA decay</keyword>
<keyword id="KW-1185">Reference proteome</keyword>
<keyword id="KW-0694">RNA-binding</keyword>
<accession>Q5ALP1</accession>
<accession>A0A1D8PGJ2</accession>
<comment type="function">
    <text evidence="1">mRNA-binding protein which stimulates mRNA decapping.</text>
</comment>
<comment type="subcellular location">
    <subcellularLocation>
        <location evidence="1">Cytoplasm</location>
    </subcellularLocation>
</comment>
<comment type="similarity">
    <text evidence="3">Belongs to the EDC family.</text>
</comment>
<gene>
    <name type="primary">EDC1</name>
    <name type="ordered locus">CAALFM_C202190CA</name>
    <name type="ORF">CaO19.1535</name>
    <name type="ORF">CaO19.9110</name>
</gene>
<name>EDC1_CANAL</name>